<keyword id="KW-0963">Cytoplasm</keyword>
<keyword id="KW-0539">Nucleus</keyword>
<keyword id="KW-0647">Proteasome</keyword>
<accession>Q9GU37</accession>
<feature type="chain" id="PRO_0000124069" description="Proteasome subunit alpha type-1">
    <location>
        <begin position="1"/>
        <end position="266"/>
    </location>
</feature>
<name>PSA1_TRYBB</name>
<dbReference type="EMBL" id="AF198386">
    <property type="protein sequence ID" value="AAG28527.1"/>
    <property type="molecule type" value="mRNA"/>
</dbReference>
<dbReference type="SMR" id="Q9GU37"/>
<dbReference type="BRENDA" id="3.4.25.1">
    <property type="organism ID" value="6519"/>
</dbReference>
<dbReference type="GO" id="GO:0005737">
    <property type="term" value="C:cytoplasm"/>
    <property type="evidence" value="ECO:0007669"/>
    <property type="project" value="UniProtKB-SubCell"/>
</dbReference>
<dbReference type="GO" id="GO:0005634">
    <property type="term" value="C:nucleus"/>
    <property type="evidence" value="ECO:0007669"/>
    <property type="project" value="UniProtKB-SubCell"/>
</dbReference>
<dbReference type="GO" id="GO:0019773">
    <property type="term" value="C:proteasome core complex, alpha-subunit complex"/>
    <property type="evidence" value="ECO:0000250"/>
    <property type="project" value="UniProtKB"/>
</dbReference>
<dbReference type="GO" id="GO:0006511">
    <property type="term" value="P:ubiquitin-dependent protein catabolic process"/>
    <property type="evidence" value="ECO:0007669"/>
    <property type="project" value="InterPro"/>
</dbReference>
<dbReference type="CDD" id="cd03754">
    <property type="entry name" value="proteasome_alpha_type_6"/>
    <property type="match status" value="1"/>
</dbReference>
<dbReference type="FunFam" id="3.60.20.10:FF:000055">
    <property type="entry name" value="Proteasome subunit alpha type"/>
    <property type="match status" value="1"/>
</dbReference>
<dbReference type="Gene3D" id="3.60.20.10">
    <property type="entry name" value="Glutamine Phosphoribosylpyrophosphate, subunit 1, domain 1"/>
    <property type="match status" value="1"/>
</dbReference>
<dbReference type="InterPro" id="IPR029055">
    <property type="entry name" value="Ntn_hydrolases_N"/>
</dbReference>
<dbReference type="InterPro" id="IPR050115">
    <property type="entry name" value="Proteasome_alpha"/>
</dbReference>
<dbReference type="InterPro" id="IPR023332">
    <property type="entry name" value="Proteasome_alpha-type"/>
</dbReference>
<dbReference type="InterPro" id="IPR000426">
    <property type="entry name" value="Proteasome_asu_N"/>
</dbReference>
<dbReference type="InterPro" id="IPR001353">
    <property type="entry name" value="Proteasome_sua/b"/>
</dbReference>
<dbReference type="InterPro" id="IPR034642">
    <property type="entry name" value="Proteasome_subunit_alpha6"/>
</dbReference>
<dbReference type="PANTHER" id="PTHR11599">
    <property type="entry name" value="PROTEASOME SUBUNIT ALPHA/BETA"/>
    <property type="match status" value="1"/>
</dbReference>
<dbReference type="Pfam" id="PF00227">
    <property type="entry name" value="Proteasome"/>
    <property type="match status" value="1"/>
</dbReference>
<dbReference type="Pfam" id="PF10584">
    <property type="entry name" value="Proteasome_A_N"/>
    <property type="match status" value="1"/>
</dbReference>
<dbReference type="SMART" id="SM00948">
    <property type="entry name" value="Proteasome_A_N"/>
    <property type="match status" value="1"/>
</dbReference>
<dbReference type="SUPFAM" id="SSF56235">
    <property type="entry name" value="N-terminal nucleophile aminohydrolases (Ntn hydrolases)"/>
    <property type="match status" value="1"/>
</dbReference>
<dbReference type="PROSITE" id="PS00388">
    <property type="entry name" value="PROTEASOME_ALPHA_1"/>
    <property type="match status" value="1"/>
</dbReference>
<dbReference type="PROSITE" id="PS51475">
    <property type="entry name" value="PROTEASOME_ALPHA_2"/>
    <property type="match status" value="1"/>
</dbReference>
<reference key="1">
    <citation type="journal article" date="2001" name="J. Biol. Chem.">
        <title>Functional assignment of the 20 S proteasome from Trypanosoma brucei using mass spectrometry and new bioinformatics approaches.</title>
        <authorList>
            <person name="Huang L."/>
            <person name="Jacob R.J."/>
            <person name="Pegg S.C.H."/>
            <person name="Baldwin M.A."/>
            <person name="Wang C.C."/>
            <person name="Burlingame A.L."/>
            <person name="Babbitt P.C."/>
        </authorList>
    </citation>
    <scope>NUCLEOTIDE SEQUENCE [MRNA]</scope>
    <source>
        <strain>427</strain>
    </source>
</reference>
<evidence type="ECO:0000250" key="1"/>
<evidence type="ECO:0000255" key="2">
    <source>
        <dbReference type="PROSITE-ProRule" id="PRU00808"/>
    </source>
</evidence>
<sequence length="266" mass="29336">MSRAGFDKYITVFSPEGSLYQVEYAFKAVTYAGLLTVAIRCKDAVLVFTQHSVPDKLMRPETITSLYNVNDNTGVCITGRAPDGKALVQKARNEASEYKYRYGMPMLVSVLAKPWQDMAQVRTQQAGMRLMGTIMTFVGMEQNDEDGAWIPQIYCVDPAGGAAVHACAVGKKQIEACAFLEKKQKNAPFHTLSQKEAAMIALAALQSALGESLRASGVEVGRCTADDHHFLRVSDREVKKWLTPLAKPGYRAAYVLVRHTFHVVNP</sequence>
<protein>
    <recommendedName>
        <fullName>Proteasome subunit alpha type-1</fullName>
    </recommendedName>
    <alternativeName>
        <fullName>20SPA1</fullName>
    </alternativeName>
</protein>
<organism>
    <name type="scientific">Trypanosoma brucei brucei</name>
    <dbReference type="NCBI Taxonomy" id="5702"/>
    <lineage>
        <taxon>Eukaryota</taxon>
        <taxon>Discoba</taxon>
        <taxon>Euglenozoa</taxon>
        <taxon>Kinetoplastea</taxon>
        <taxon>Metakinetoplastina</taxon>
        <taxon>Trypanosomatida</taxon>
        <taxon>Trypanosomatidae</taxon>
        <taxon>Trypanosoma</taxon>
    </lineage>
</organism>
<comment type="function">
    <text>The proteasome is a multicatalytic proteinase complex which is characterized by its ability to cleave peptides with Arg, Phe, Tyr, Leu, and Glu adjacent to the leaving group at neutral or slightly basic pH. The proteasome has an ATP-dependent proteolytic activity.</text>
</comment>
<comment type="subunit">
    <text evidence="1">The 26S proteasome consists of a 20S proteasome core and two 19S regulatory subunits. The 20S proteasome core is composed of 28 subunits that are arranged in four stacked rings, resulting in a barrel-shaped structure. The two end rings are each formed by seven alpha subunits, and the two central rings are each formed by seven beta subunits. The catalytic chamber with the active sites is on the inside of the barrel (By similarity).</text>
</comment>
<comment type="subcellular location">
    <subcellularLocation>
        <location evidence="1">Cytoplasm</location>
    </subcellularLocation>
    <subcellularLocation>
        <location evidence="1">Nucleus</location>
    </subcellularLocation>
</comment>
<comment type="similarity">
    <text evidence="2">Belongs to the peptidase T1A family.</text>
</comment>
<proteinExistence type="evidence at transcript level"/>